<keyword id="KW-0903">Direct protein sequencing</keyword>
<keyword id="KW-0964">Secreted</keyword>
<keyword id="KW-0800">Toxin</keyword>
<comment type="subcellular location">
    <subcellularLocation>
        <location evidence="1">Secreted</location>
    </subcellularLocation>
</comment>
<comment type="tissue specificity">
    <text evidence="1">Expressed by the venom gland.</text>
</comment>
<comment type="mass spectrometry"/>
<protein>
    <recommendedName>
        <fullName>Toxin To56</fullName>
    </recommendedName>
    <alternativeName>
        <fullName>Toxin Tc56</fullName>
    </alternativeName>
</protein>
<sequence>EKGKEILGKI</sequence>
<reference evidence="3" key="1">
    <citation type="journal article" date="2004" name="J. Chromatogr. B">
        <title>Proteomics of the venom from the Amazonian scorpion Tityus cambridgei and the role of prolines on mass spectrometry analysis of toxins.</title>
        <authorList>
            <person name="Batista C.V.F."/>
            <person name="del Pozo L."/>
            <person name="Zamudio F.Z."/>
            <person name="Contreras S."/>
            <person name="Becerril B."/>
            <person name="Wanke E."/>
            <person name="Possani L.D."/>
        </authorList>
    </citation>
    <scope>PROTEIN SEQUENCE</scope>
    <scope>SUBCELLULAR LOCATION</scope>
    <scope>TISSUE SPECIFICITY</scope>
    <scope>MASS SPECTROMETRY</scope>
    <source>
        <tissue evidence="1">Venom</tissue>
    </source>
</reference>
<evidence type="ECO:0000269" key="1">
    <source>
    </source>
</evidence>
<evidence type="ECO:0000303" key="2">
    <source>
    </source>
</evidence>
<evidence type="ECO:0000305" key="3"/>
<name>SC56_TITOB</name>
<proteinExistence type="evidence at protein level"/>
<accession>P84689</accession>
<feature type="chain" id="PRO_0000066814" description="Toxin To56">
    <location>
        <begin position="1"/>
        <end position="10" status="greater than"/>
    </location>
</feature>
<feature type="non-terminal residue" evidence="2">
    <location>
        <position position="10"/>
    </location>
</feature>
<organism>
    <name type="scientific">Tityus obscurus</name>
    <name type="common">Amazonian scorpion</name>
    <name type="synonym">Tityus cambridgei</name>
    <dbReference type="NCBI Taxonomy" id="1221240"/>
    <lineage>
        <taxon>Eukaryota</taxon>
        <taxon>Metazoa</taxon>
        <taxon>Ecdysozoa</taxon>
        <taxon>Arthropoda</taxon>
        <taxon>Chelicerata</taxon>
        <taxon>Arachnida</taxon>
        <taxon>Scorpiones</taxon>
        <taxon>Buthida</taxon>
        <taxon>Buthoidea</taxon>
        <taxon>Buthidae</taxon>
        <taxon>Tityus</taxon>
    </lineage>
</organism>
<dbReference type="GO" id="GO:0005576">
    <property type="term" value="C:extracellular region"/>
    <property type="evidence" value="ECO:0007005"/>
    <property type="project" value="UniProtKB"/>
</dbReference>
<dbReference type="GO" id="GO:0090729">
    <property type="term" value="F:toxin activity"/>
    <property type="evidence" value="ECO:0007669"/>
    <property type="project" value="UniProtKB-KW"/>
</dbReference>